<name>ISPH_BACC0</name>
<protein>
    <recommendedName>
        <fullName evidence="1">4-hydroxy-3-methylbut-2-enyl diphosphate reductase</fullName>
        <shortName evidence="1">HMBPP reductase</shortName>
        <ecNumber evidence="1">1.17.7.4</ecNumber>
    </recommendedName>
</protein>
<dbReference type="EC" id="1.17.7.4" evidence="1"/>
<dbReference type="EMBL" id="CP001283">
    <property type="protein sequence ID" value="ACK90631.1"/>
    <property type="molecule type" value="Genomic_DNA"/>
</dbReference>
<dbReference type="RefSeq" id="WP_000706670.1">
    <property type="nucleotide sequence ID" value="NC_011773.1"/>
</dbReference>
<dbReference type="SMR" id="B7JN13"/>
<dbReference type="KEGG" id="bcu:BCAH820_4310"/>
<dbReference type="HOGENOM" id="CLU_027486_0_0_9"/>
<dbReference type="UniPathway" id="UPA00056">
    <property type="reaction ID" value="UER00097"/>
</dbReference>
<dbReference type="UniPathway" id="UPA00059">
    <property type="reaction ID" value="UER00105"/>
</dbReference>
<dbReference type="Proteomes" id="UP000001363">
    <property type="component" value="Chromosome"/>
</dbReference>
<dbReference type="GO" id="GO:0051539">
    <property type="term" value="F:4 iron, 4 sulfur cluster binding"/>
    <property type="evidence" value="ECO:0007669"/>
    <property type="project" value="UniProtKB-UniRule"/>
</dbReference>
<dbReference type="GO" id="GO:0051745">
    <property type="term" value="F:4-hydroxy-3-methylbut-2-enyl diphosphate reductase activity"/>
    <property type="evidence" value="ECO:0007669"/>
    <property type="project" value="UniProtKB-UniRule"/>
</dbReference>
<dbReference type="GO" id="GO:0046872">
    <property type="term" value="F:metal ion binding"/>
    <property type="evidence" value="ECO:0007669"/>
    <property type="project" value="UniProtKB-KW"/>
</dbReference>
<dbReference type="GO" id="GO:0050992">
    <property type="term" value="P:dimethylallyl diphosphate biosynthetic process"/>
    <property type="evidence" value="ECO:0007669"/>
    <property type="project" value="UniProtKB-UniRule"/>
</dbReference>
<dbReference type="GO" id="GO:0019288">
    <property type="term" value="P:isopentenyl diphosphate biosynthetic process, methylerythritol 4-phosphate pathway"/>
    <property type="evidence" value="ECO:0007669"/>
    <property type="project" value="UniProtKB-UniRule"/>
</dbReference>
<dbReference type="GO" id="GO:0016114">
    <property type="term" value="P:terpenoid biosynthetic process"/>
    <property type="evidence" value="ECO:0007669"/>
    <property type="project" value="UniProtKB-UniRule"/>
</dbReference>
<dbReference type="CDD" id="cd13944">
    <property type="entry name" value="lytB_ispH"/>
    <property type="match status" value="1"/>
</dbReference>
<dbReference type="Gene3D" id="3.40.50.11270">
    <property type="match status" value="1"/>
</dbReference>
<dbReference type="Gene3D" id="3.40.1010.20">
    <property type="entry name" value="4-hydroxy-3-methylbut-2-enyl diphosphate reductase, catalytic domain"/>
    <property type="match status" value="2"/>
</dbReference>
<dbReference type="HAMAP" id="MF_00191">
    <property type="entry name" value="IspH"/>
    <property type="match status" value="1"/>
</dbReference>
<dbReference type="InterPro" id="IPR003451">
    <property type="entry name" value="LytB/IspH"/>
</dbReference>
<dbReference type="NCBIfam" id="TIGR00216">
    <property type="entry name" value="ispH_lytB"/>
    <property type="match status" value="1"/>
</dbReference>
<dbReference type="NCBIfam" id="NF002187">
    <property type="entry name" value="PRK01045.1-1"/>
    <property type="match status" value="1"/>
</dbReference>
<dbReference type="PANTHER" id="PTHR30426">
    <property type="entry name" value="4-HYDROXY-3-METHYLBUT-2-ENYL DIPHOSPHATE REDUCTASE"/>
    <property type="match status" value="1"/>
</dbReference>
<dbReference type="PANTHER" id="PTHR30426:SF0">
    <property type="entry name" value="4-HYDROXY-3-METHYLBUT-2-ENYL DIPHOSPHATE REDUCTASE"/>
    <property type="match status" value="1"/>
</dbReference>
<dbReference type="Pfam" id="PF02401">
    <property type="entry name" value="LYTB"/>
    <property type="match status" value="1"/>
</dbReference>
<feature type="chain" id="PRO_1000118598" description="4-hydroxy-3-methylbut-2-enyl diphosphate reductase">
    <location>
        <begin position="1"/>
        <end position="316"/>
    </location>
</feature>
<feature type="active site" description="Proton donor" evidence="1">
    <location>
        <position position="133"/>
    </location>
</feature>
<feature type="binding site" evidence="1">
    <location>
        <position position="12"/>
    </location>
    <ligand>
        <name>[4Fe-4S] cluster</name>
        <dbReference type="ChEBI" id="CHEBI:49883"/>
    </ligand>
</feature>
<feature type="binding site" evidence="1">
    <location>
        <position position="43"/>
    </location>
    <ligand>
        <name>(2E)-4-hydroxy-3-methylbut-2-enyl diphosphate</name>
        <dbReference type="ChEBI" id="CHEBI:128753"/>
    </ligand>
</feature>
<feature type="binding site" evidence="1">
    <location>
        <position position="43"/>
    </location>
    <ligand>
        <name>dimethylallyl diphosphate</name>
        <dbReference type="ChEBI" id="CHEBI:57623"/>
    </ligand>
</feature>
<feature type="binding site" evidence="1">
    <location>
        <position position="43"/>
    </location>
    <ligand>
        <name>isopentenyl diphosphate</name>
        <dbReference type="ChEBI" id="CHEBI:128769"/>
    </ligand>
</feature>
<feature type="binding site" evidence="1">
    <location>
        <position position="81"/>
    </location>
    <ligand>
        <name>(2E)-4-hydroxy-3-methylbut-2-enyl diphosphate</name>
        <dbReference type="ChEBI" id="CHEBI:128753"/>
    </ligand>
</feature>
<feature type="binding site" evidence="1">
    <location>
        <position position="81"/>
    </location>
    <ligand>
        <name>dimethylallyl diphosphate</name>
        <dbReference type="ChEBI" id="CHEBI:57623"/>
    </ligand>
</feature>
<feature type="binding site" evidence="1">
    <location>
        <position position="81"/>
    </location>
    <ligand>
        <name>isopentenyl diphosphate</name>
        <dbReference type="ChEBI" id="CHEBI:128769"/>
    </ligand>
</feature>
<feature type="binding site" evidence="1">
    <location>
        <position position="103"/>
    </location>
    <ligand>
        <name>[4Fe-4S] cluster</name>
        <dbReference type="ChEBI" id="CHEBI:49883"/>
    </ligand>
</feature>
<feature type="binding site" evidence="1">
    <location>
        <position position="131"/>
    </location>
    <ligand>
        <name>(2E)-4-hydroxy-3-methylbut-2-enyl diphosphate</name>
        <dbReference type="ChEBI" id="CHEBI:128753"/>
    </ligand>
</feature>
<feature type="binding site" evidence="1">
    <location>
        <position position="131"/>
    </location>
    <ligand>
        <name>dimethylallyl diphosphate</name>
        <dbReference type="ChEBI" id="CHEBI:57623"/>
    </ligand>
</feature>
<feature type="binding site" evidence="1">
    <location>
        <position position="131"/>
    </location>
    <ligand>
        <name>isopentenyl diphosphate</name>
        <dbReference type="ChEBI" id="CHEBI:128769"/>
    </ligand>
</feature>
<feature type="binding site" evidence="1">
    <location>
        <position position="170"/>
    </location>
    <ligand>
        <name>(2E)-4-hydroxy-3-methylbut-2-enyl diphosphate</name>
        <dbReference type="ChEBI" id="CHEBI:128753"/>
    </ligand>
</feature>
<feature type="binding site" evidence="1">
    <location>
        <position position="198"/>
    </location>
    <ligand>
        <name>[4Fe-4S] cluster</name>
        <dbReference type="ChEBI" id="CHEBI:49883"/>
    </ligand>
</feature>
<feature type="binding site" evidence="1">
    <location>
        <position position="226"/>
    </location>
    <ligand>
        <name>(2E)-4-hydroxy-3-methylbut-2-enyl diphosphate</name>
        <dbReference type="ChEBI" id="CHEBI:128753"/>
    </ligand>
</feature>
<feature type="binding site" evidence="1">
    <location>
        <position position="226"/>
    </location>
    <ligand>
        <name>dimethylallyl diphosphate</name>
        <dbReference type="ChEBI" id="CHEBI:57623"/>
    </ligand>
</feature>
<feature type="binding site" evidence="1">
    <location>
        <position position="226"/>
    </location>
    <ligand>
        <name>isopentenyl diphosphate</name>
        <dbReference type="ChEBI" id="CHEBI:128769"/>
    </ligand>
</feature>
<feature type="binding site" evidence="1">
    <location>
        <position position="228"/>
    </location>
    <ligand>
        <name>(2E)-4-hydroxy-3-methylbut-2-enyl diphosphate</name>
        <dbReference type="ChEBI" id="CHEBI:128753"/>
    </ligand>
</feature>
<feature type="binding site" evidence="1">
    <location>
        <position position="228"/>
    </location>
    <ligand>
        <name>dimethylallyl diphosphate</name>
        <dbReference type="ChEBI" id="CHEBI:57623"/>
    </ligand>
</feature>
<feature type="binding site" evidence="1">
    <location>
        <position position="228"/>
    </location>
    <ligand>
        <name>isopentenyl diphosphate</name>
        <dbReference type="ChEBI" id="CHEBI:128769"/>
    </ligand>
</feature>
<feature type="binding site" evidence="1">
    <location>
        <position position="271"/>
    </location>
    <ligand>
        <name>(2E)-4-hydroxy-3-methylbut-2-enyl diphosphate</name>
        <dbReference type="ChEBI" id="CHEBI:128753"/>
    </ligand>
</feature>
<feature type="binding site" evidence="1">
    <location>
        <position position="271"/>
    </location>
    <ligand>
        <name>dimethylallyl diphosphate</name>
        <dbReference type="ChEBI" id="CHEBI:57623"/>
    </ligand>
</feature>
<feature type="binding site" evidence="1">
    <location>
        <position position="271"/>
    </location>
    <ligand>
        <name>isopentenyl diphosphate</name>
        <dbReference type="ChEBI" id="CHEBI:128769"/>
    </ligand>
</feature>
<evidence type="ECO:0000255" key="1">
    <source>
        <dbReference type="HAMAP-Rule" id="MF_00191"/>
    </source>
</evidence>
<keyword id="KW-0004">4Fe-4S</keyword>
<keyword id="KW-0408">Iron</keyword>
<keyword id="KW-0411">Iron-sulfur</keyword>
<keyword id="KW-0414">Isoprene biosynthesis</keyword>
<keyword id="KW-0479">Metal-binding</keyword>
<keyword id="KW-0560">Oxidoreductase</keyword>
<proteinExistence type="inferred from homology"/>
<gene>
    <name evidence="1" type="primary">ispH</name>
    <name type="ordered locus">BCAH820_4310</name>
</gene>
<accession>B7JN13</accession>
<sequence length="316" mass="34953">MKIVKISPRGYCYGVVDAMVIARNAALDTSLPRPIYILGMIVHNKHVTDAFEEDGIITLDGPSRLDILDKIDSGTVIFTAHGVSPEVKQRAKEKGLTTIDATCPDVTKTHDLIEAKKAEGYHVIYIGKKNHPEPEGAVGIAPDIVHLIERADDLKTLEIPTDKILVTNQTTMSQWDVQHLMEDIQKKFPTAEFHKEICLATQVRQEAVAKQADVADLTIVVGDPKSNNSNRLAQVSQEIAGTKAYRVADVSEINLEWLQGVENVAVTAGASTPTPITKEVIAFLEQYDPMNPATWERVRKVPLQKILPRVKVKKEQ</sequence>
<reference key="1">
    <citation type="submission" date="2008-10" db="EMBL/GenBank/DDBJ databases">
        <title>Genome sequence of Bacillus cereus AH820.</title>
        <authorList>
            <person name="Dodson R.J."/>
            <person name="Durkin A.S."/>
            <person name="Rosovitz M.J."/>
            <person name="Rasko D.A."/>
            <person name="Hoffmaster A."/>
            <person name="Ravel J."/>
            <person name="Sutton G."/>
        </authorList>
    </citation>
    <scope>NUCLEOTIDE SEQUENCE [LARGE SCALE GENOMIC DNA]</scope>
    <source>
        <strain>AH820</strain>
    </source>
</reference>
<comment type="function">
    <text evidence="1">Catalyzes the conversion of 1-hydroxy-2-methyl-2-(E)-butenyl 4-diphosphate (HMBPP) into a mixture of isopentenyl diphosphate (IPP) and dimethylallyl diphosphate (DMAPP). Acts in the terminal step of the DOXP/MEP pathway for isoprenoid precursor biosynthesis.</text>
</comment>
<comment type="catalytic activity">
    <reaction evidence="1">
        <text>isopentenyl diphosphate + 2 oxidized [2Fe-2S]-[ferredoxin] + H2O = (2E)-4-hydroxy-3-methylbut-2-enyl diphosphate + 2 reduced [2Fe-2S]-[ferredoxin] + 2 H(+)</text>
        <dbReference type="Rhea" id="RHEA:24488"/>
        <dbReference type="Rhea" id="RHEA-COMP:10000"/>
        <dbReference type="Rhea" id="RHEA-COMP:10001"/>
        <dbReference type="ChEBI" id="CHEBI:15377"/>
        <dbReference type="ChEBI" id="CHEBI:15378"/>
        <dbReference type="ChEBI" id="CHEBI:33737"/>
        <dbReference type="ChEBI" id="CHEBI:33738"/>
        <dbReference type="ChEBI" id="CHEBI:128753"/>
        <dbReference type="ChEBI" id="CHEBI:128769"/>
        <dbReference type="EC" id="1.17.7.4"/>
    </reaction>
</comment>
<comment type="catalytic activity">
    <reaction evidence="1">
        <text>dimethylallyl diphosphate + 2 oxidized [2Fe-2S]-[ferredoxin] + H2O = (2E)-4-hydroxy-3-methylbut-2-enyl diphosphate + 2 reduced [2Fe-2S]-[ferredoxin] + 2 H(+)</text>
        <dbReference type="Rhea" id="RHEA:24825"/>
        <dbReference type="Rhea" id="RHEA-COMP:10000"/>
        <dbReference type="Rhea" id="RHEA-COMP:10001"/>
        <dbReference type="ChEBI" id="CHEBI:15377"/>
        <dbReference type="ChEBI" id="CHEBI:15378"/>
        <dbReference type="ChEBI" id="CHEBI:33737"/>
        <dbReference type="ChEBI" id="CHEBI:33738"/>
        <dbReference type="ChEBI" id="CHEBI:57623"/>
        <dbReference type="ChEBI" id="CHEBI:128753"/>
        <dbReference type="EC" id="1.17.7.4"/>
    </reaction>
</comment>
<comment type="cofactor">
    <cofactor evidence="1">
        <name>[4Fe-4S] cluster</name>
        <dbReference type="ChEBI" id="CHEBI:49883"/>
    </cofactor>
    <text evidence="1">Binds 1 [4Fe-4S] cluster per subunit.</text>
</comment>
<comment type="pathway">
    <text evidence="1">Isoprenoid biosynthesis; dimethylallyl diphosphate biosynthesis; dimethylallyl diphosphate from (2E)-4-hydroxy-3-methylbutenyl diphosphate: step 1/1.</text>
</comment>
<comment type="pathway">
    <text evidence="1">Isoprenoid biosynthesis; isopentenyl diphosphate biosynthesis via DXP pathway; isopentenyl diphosphate from 1-deoxy-D-xylulose 5-phosphate: step 6/6.</text>
</comment>
<comment type="similarity">
    <text evidence="1">Belongs to the IspH family.</text>
</comment>
<organism>
    <name type="scientific">Bacillus cereus (strain AH820)</name>
    <dbReference type="NCBI Taxonomy" id="405535"/>
    <lineage>
        <taxon>Bacteria</taxon>
        <taxon>Bacillati</taxon>
        <taxon>Bacillota</taxon>
        <taxon>Bacilli</taxon>
        <taxon>Bacillales</taxon>
        <taxon>Bacillaceae</taxon>
        <taxon>Bacillus</taxon>
        <taxon>Bacillus cereus group</taxon>
    </lineage>
</organism>